<accession>A5U1L9</accession>
<reference key="1">
    <citation type="journal article" date="2008" name="PLoS ONE">
        <title>Genetic basis of virulence attenuation revealed by comparative genomic analysis of Mycobacterium tuberculosis strain H37Ra versus H37Rv.</title>
        <authorList>
            <person name="Zheng H."/>
            <person name="Lu L."/>
            <person name="Wang B."/>
            <person name="Pu S."/>
            <person name="Zhang X."/>
            <person name="Zhu G."/>
            <person name="Shi W."/>
            <person name="Zhang L."/>
            <person name="Wang H."/>
            <person name="Wang S."/>
            <person name="Zhao G."/>
            <person name="Zhang Y."/>
        </authorList>
    </citation>
    <scope>NUCLEOTIDE SEQUENCE [LARGE SCALE GENOMIC DNA]</scope>
    <source>
        <strain>ATCC 25177 / H37Ra</strain>
    </source>
</reference>
<feature type="chain" id="PRO_0000400205" description="1D-myo-inositol 2-acetamido-2-deoxy-alpha-D-glucopyranoside deacetylase">
    <location>
        <begin position="1"/>
        <end position="303"/>
    </location>
</feature>
<feature type="binding site" evidence="1">
    <location>
        <position position="13"/>
    </location>
    <ligand>
        <name>Zn(2+)</name>
        <dbReference type="ChEBI" id="CHEBI:29105"/>
    </ligand>
</feature>
<feature type="binding site" evidence="1">
    <location>
        <position position="16"/>
    </location>
    <ligand>
        <name>Zn(2+)</name>
        <dbReference type="ChEBI" id="CHEBI:29105"/>
    </ligand>
</feature>
<feature type="binding site" evidence="1">
    <location>
        <position position="147"/>
    </location>
    <ligand>
        <name>Zn(2+)</name>
        <dbReference type="ChEBI" id="CHEBI:29105"/>
    </ligand>
</feature>
<protein>
    <recommendedName>
        <fullName evidence="1">1D-myo-inositol 2-acetamido-2-deoxy-alpha-D-glucopyranoside deacetylase</fullName>
        <shortName evidence="1">GlcNAc-Ins deacetylase</shortName>
        <ecNumber evidence="1">3.5.1.103</ecNumber>
    </recommendedName>
    <alternativeName>
        <fullName>N-acetyl-1-D-myo-inositol 2-amino-2-deoxy-alpha-D-glucopyranoside deacetylase</fullName>
    </alternativeName>
</protein>
<gene>
    <name evidence="1" type="primary">mshB</name>
    <name type="ordered locus">MRA_1181</name>
</gene>
<keyword id="KW-0378">Hydrolase</keyword>
<keyword id="KW-0479">Metal-binding</keyword>
<keyword id="KW-1185">Reference proteome</keyword>
<keyword id="KW-0862">Zinc</keyword>
<dbReference type="EC" id="3.5.1.103" evidence="1"/>
<dbReference type="EMBL" id="CP000611">
    <property type="protein sequence ID" value="ABQ72919.1"/>
    <property type="molecule type" value="Genomic_DNA"/>
</dbReference>
<dbReference type="RefSeq" id="WP_003406154.1">
    <property type="nucleotide sequence ID" value="NZ_CP016972.1"/>
</dbReference>
<dbReference type="SMR" id="A5U1L9"/>
<dbReference type="GeneID" id="45425142"/>
<dbReference type="KEGG" id="mra:MRA_1181"/>
<dbReference type="eggNOG" id="COG2120">
    <property type="taxonomic scope" value="Bacteria"/>
</dbReference>
<dbReference type="HOGENOM" id="CLU_049311_2_1_11"/>
<dbReference type="Proteomes" id="UP000001988">
    <property type="component" value="Chromosome"/>
</dbReference>
<dbReference type="GO" id="GO:0035595">
    <property type="term" value="F:N-acetylglucosaminylinositol deacetylase activity"/>
    <property type="evidence" value="ECO:0007669"/>
    <property type="project" value="UniProtKB-EC"/>
</dbReference>
<dbReference type="GO" id="GO:0008270">
    <property type="term" value="F:zinc ion binding"/>
    <property type="evidence" value="ECO:0007669"/>
    <property type="project" value="UniProtKB-UniRule"/>
</dbReference>
<dbReference type="GO" id="GO:0010125">
    <property type="term" value="P:mycothiol biosynthetic process"/>
    <property type="evidence" value="ECO:0007669"/>
    <property type="project" value="UniProtKB-UniRule"/>
</dbReference>
<dbReference type="Gene3D" id="3.40.50.10320">
    <property type="entry name" value="LmbE-like"/>
    <property type="match status" value="1"/>
</dbReference>
<dbReference type="HAMAP" id="MF_01696">
    <property type="entry name" value="MshB"/>
    <property type="match status" value="1"/>
</dbReference>
<dbReference type="InterPro" id="IPR003737">
    <property type="entry name" value="GlcNAc_PI_deacetylase-related"/>
</dbReference>
<dbReference type="InterPro" id="IPR024078">
    <property type="entry name" value="LmbE-like_dom_sf"/>
</dbReference>
<dbReference type="InterPro" id="IPR017810">
    <property type="entry name" value="Mycothiol_biosynthesis_MshB"/>
</dbReference>
<dbReference type="NCBIfam" id="TIGR03445">
    <property type="entry name" value="mycothiol_MshB"/>
    <property type="match status" value="1"/>
</dbReference>
<dbReference type="PANTHER" id="PTHR12993:SF26">
    <property type="entry name" value="1D-MYO-INOSITOL 2-ACETAMIDO-2-DEOXY-ALPHA-D-GLUCOPYRANOSIDE DEACETYLASE"/>
    <property type="match status" value="1"/>
</dbReference>
<dbReference type="PANTHER" id="PTHR12993">
    <property type="entry name" value="N-ACETYLGLUCOSAMINYL-PHOSPHATIDYLINOSITOL DE-N-ACETYLASE-RELATED"/>
    <property type="match status" value="1"/>
</dbReference>
<dbReference type="Pfam" id="PF02585">
    <property type="entry name" value="PIG-L"/>
    <property type="match status" value="1"/>
</dbReference>
<dbReference type="SUPFAM" id="SSF102588">
    <property type="entry name" value="LmbE-like"/>
    <property type="match status" value="1"/>
</dbReference>
<name>MSHB_MYCTA</name>
<evidence type="ECO:0000255" key="1">
    <source>
        <dbReference type="HAMAP-Rule" id="MF_01696"/>
    </source>
</evidence>
<sequence length="303" mass="31742">MSETPRLLFVHAHPDDESLSNGATIAHYTSRGAQVHVVTCTLGEEGEVIGDRWAQLTADHADQLGGYRIGELTAALRALGVSAPIYLGGAGRWRDSGMAGTDQRSQRRFVDADPRQTVGALVAIIRELRPHVVVTYDPNGGYGHPDHVHTHTVTTAAVAAAGVGSGTADHPGDPWTVPKFYWTVLGLSALISGARALVPDDLRPEWVLPRADEIAFGYSDDGIDAVVEADEQARAAKVAALAAHATQVVVGPTGRAAALSNNLALPILADEHYVLAGGSAGARDERGWETDLLAGLGFTASGT</sequence>
<comment type="function">
    <text evidence="1">Catalyzes the deacetylation of 1D-myo-inositol 2-acetamido-2-deoxy-alpha-D-glucopyranoside (GlcNAc-Ins) in the mycothiol biosynthesis pathway.</text>
</comment>
<comment type="catalytic activity">
    <reaction evidence="1">
        <text>1D-myo-inositol 2-acetamido-2-deoxy-alpha-D-glucopyranoside + H2O = 1D-myo-inositol 2-amino-2-deoxy-alpha-D-glucopyranoside + acetate</text>
        <dbReference type="Rhea" id="RHEA:26180"/>
        <dbReference type="ChEBI" id="CHEBI:15377"/>
        <dbReference type="ChEBI" id="CHEBI:30089"/>
        <dbReference type="ChEBI" id="CHEBI:52442"/>
        <dbReference type="ChEBI" id="CHEBI:58886"/>
        <dbReference type="EC" id="3.5.1.103"/>
    </reaction>
</comment>
<comment type="cofactor">
    <cofactor evidence="1">
        <name>Zn(2+)</name>
        <dbReference type="ChEBI" id="CHEBI:29105"/>
    </cofactor>
    <text evidence="1">Binds 1 zinc ion per subunit.</text>
</comment>
<comment type="similarity">
    <text evidence="1">Belongs to the MshB deacetylase family.</text>
</comment>
<organism>
    <name type="scientific">Mycobacterium tuberculosis (strain ATCC 25177 / H37Ra)</name>
    <dbReference type="NCBI Taxonomy" id="419947"/>
    <lineage>
        <taxon>Bacteria</taxon>
        <taxon>Bacillati</taxon>
        <taxon>Actinomycetota</taxon>
        <taxon>Actinomycetes</taxon>
        <taxon>Mycobacteriales</taxon>
        <taxon>Mycobacteriaceae</taxon>
        <taxon>Mycobacterium</taxon>
        <taxon>Mycobacterium tuberculosis complex</taxon>
    </lineage>
</organism>
<proteinExistence type="inferred from homology"/>